<feature type="chain" id="PRO_0000168931" description="Uncharacterized protein YdcH">
    <location>
        <begin position="1"/>
        <end position="74"/>
    </location>
</feature>
<organism>
    <name type="scientific">Shigella flexneri</name>
    <dbReference type="NCBI Taxonomy" id="623"/>
    <lineage>
        <taxon>Bacteria</taxon>
        <taxon>Pseudomonadati</taxon>
        <taxon>Pseudomonadota</taxon>
        <taxon>Gammaproteobacteria</taxon>
        <taxon>Enterobacterales</taxon>
        <taxon>Enterobacteriaceae</taxon>
        <taxon>Shigella</taxon>
    </lineage>
</organism>
<evidence type="ECO:0000305" key="1"/>
<proteinExistence type="predicted"/>
<protein>
    <recommendedName>
        <fullName>Uncharacterized protein YdcH</fullName>
    </recommendedName>
</protein>
<sequence>MFPEYRDLISRLKNENPRFMSLFDKHNKLDHEIARKEGSDGRGYNAEVVRMKKQKLQLKDEMLKILQQESVKEV</sequence>
<comment type="sequence caution" evidence="1">
    <conflict type="erroneous initiation">
        <sequence resource="EMBL-CDS" id="AAN43353"/>
    </conflict>
</comment>
<comment type="sequence caution" evidence="1">
    <conflict type="erroneous initiation">
        <sequence resource="EMBL-CDS" id="AAP16875"/>
    </conflict>
</comment>
<name>YDCH_SHIFL</name>
<gene>
    <name type="primary">ydcH</name>
    <name type="ordered locus">SF1784</name>
    <name type="ordered locus">S1490</name>
</gene>
<reference key="1">
    <citation type="journal article" date="2002" name="Nucleic Acids Res.">
        <title>Genome sequence of Shigella flexneri 2a: insights into pathogenicity through comparison with genomes of Escherichia coli K12 and O157.</title>
        <authorList>
            <person name="Jin Q."/>
            <person name="Yuan Z."/>
            <person name="Xu J."/>
            <person name="Wang Y."/>
            <person name="Shen Y."/>
            <person name="Lu W."/>
            <person name="Wang J."/>
            <person name="Liu H."/>
            <person name="Yang J."/>
            <person name="Yang F."/>
            <person name="Zhang X."/>
            <person name="Zhang J."/>
            <person name="Yang G."/>
            <person name="Wu H."/>
            <person name="Qu D."/>
            <person name="Dong J."/>
            <person name="Sun L."/>
            <person name="Xue Y."/>
            <person name="Zhao A."/>
            <person name="Gao Y."/>
            <person name="Zhu J."/>
            <person name="Kan B."/>
            <person name="Ding K."/>
            <person name="Chen S."/>
            <person name="Cheng H."/>
            <person name="Yao Z."/>
            <person name="He B."/>
            <person name="Chen R."/>
            <person name="Ma D."/>
            <person name="Qiang B."/>
            <person name="Wen Y."/>
            <person name="Hou Y."/>
            <person name="Yu J."/>
        </authorList>
    </citation>
    <scope>NUCLEOTIDE SEQUENCE [LARGE SCALE GENOMIC DNA]</scope>
    <source>
        <strain>301 / Serotype 2a</strain>
    </source>
</reference>
<reference key="2">
    <citation type="journal article" date="2003" name="Infect. Immun.">
        <title>Complete genome sequence and comparative genomics of Shigella flexneri serotype 2a strain 2457T.</title>
        <authorList>
            <person name="Wei J."/>
            <person name="Goldberg M.B."/>
            <person name="Burland V."/>
            <person name="Venkatesan M.M."/>
            <person name="Deng W."/>
            <person name="Fournier G."/>
            <person name="Mayhew G.F."/>
            <person name="Plunkett G. III"/>
            <person name="Rose D.J."/>
            <person name="Darling A."/>
            <person name="Mau B."/>
            <person name="Perna N.T."/>
            <person name="Payne S.M."/>
            <person name="Runyen-Janecky L.J."/>
            <person name="Zhou S."/>
            <person name="Schwartz D.C."/>
            <person name="Blattner F.R."/>
        </authorList>
    </citation>
    <scope>NUCLEOTIDE SEQUENCE [LARGE SCALE GENOMIC DNA]</scope>
    <source>
        <strain>ATCC 700930 / 2457T / Serotype 2a</strain>
    </source>
</reference>
<accession>P0ACW7</accession>
<accession>P46135</accession>
<keyword id="KW-1185">Reference proteome</keyword>
<dbReference type="EMBL" id="AE005674">
    <property type="protein sequence ID" value="AAN43353.2"/>
    <property type="status" value="ALT_INIT"/>
    <property type="molecule type" value="Genomic_DNA"/>
</dbReference>
<dbReference type="EMBL" id="AE014073">
    <property type="protein sequence ID" value="AAP16875.1"/>
    <property type="status" value="ALT_INIT"/>
    <property type="molecule type" value="Genomic_DNA"/>
</dbReference>
<dbReference type="RefSeq" id="NP_707646.2">
    <property type="nucleotide sequence ID" value="NC_004337.2"/>
</dbReference>
<dbReference type="RefSeq" id="WP_001296778.1">
    <property type="nucleotide sequence ID" value="NZ_WPGW01000106.1"/>
</dbReference>
<dbReference type="SMR" id="P0ACW7"/>
<dbReference type="STRING" id="198214.SF1784"/>
<dbReference type="PaxDb" id="198214-SF1784"/>
<dbReference type="GeneID" id="1024958"/>
<dbReference type="KEGG" id="sfl:SF1784"/>
<dbReference type="KEGG" id="sfx:S1490"/>
<dbReference type="PATRIC" id="fig|198214.7.peg.2118"/>
<dbReference type="HOGENOM" id="CLU_165482_2_2_6"/>
<dbReference type="Proteomes" id="UP000001006">
    <property type="component" value="Chromosome"/>
</dbReference>
<dbReference type="Proteomes" id="UP000002673">
    <property type="component" value="Chromosome"/>
</dbReference>
<dbReference type="Gene3D" id="6.10.280.50">
    <property type="match status" value="1"/>
</dbReference>
<dbReference type="InterPro" id="IPR007420">
    <property type="entry name" value="DUF465"/>
</dbReference>
<dbReference type="InterPro" id="IPR038444">
    <property type="entry name" value="DUF465_sf"/>
</dbReference>
<dbReference type="NCBIfam" id="NF008505">
    <property type="entry name" value="PRK11415.1"/>
    <property type="match status" value="1"/>
</dbReference>
<dbReference type="Pfam" id="PF04325">
    <property type="entry name" value="DUF465"/>
    <property type="match status" value="1"/>
</dbReference>